<protein>
    <recommendedName>
        <fullName evidence="1">Segregation and condensation protein A</fullName>
    </recommendedName>
</protein>
<name>SCPA_STRE4</name>
<accession>C0M7Q5</accession>
<sequence>MDIKVKDFEGPLDLLLHLVSKYEVDVYQVPIVEVIEQYLAYIETLQAMRLELAGEYMLMASQLMLIKSRRLLPKLVDKEPDEEDLEQELLGKIEEYSRFKALSQELASQHDKRALLFSKPKQELIFEQAVLQKDKTVMDLFLAFSQLMAAKQEAFKYNHTVIERDDYRIEDMMELIEARLELEQELTLTDLLKHCDHLNEAITLFLASLELIKRQLVGIEQTSHFGQIVLRKEIQ</sequence>
<keyword id="KW-0131">Cell cycle</keyword>
<keyword id="KW-0132">Cell division</keyword>
<keyword id="KW-0159">Chromosome partition</keyword>
<keyword id="KW-0963">Cytoplasm</keyword>
<evidence type="ECO:0000255" key="1">
    <source>
        <dbReference type="HAMAP-Rule" id="MF_01805"/>
    </source>
</evidence>
<dbReference type="EMBL" id="FM204883">
    <property type="protein sequence ID" value="CAW95032.1"/>
    <property type="molecule type" value="Genomic_DNA"/>
</dbReference>
<dbReference type="RefSeq" id="WP_012680055.1">
    <property type="nucleotide sequence ID" value="NC_012471.1"/>
</dbReference>
<dbReference type="SMR" id="C0M7Q5"/>
<dbReference type="KEGG" id="seu:SEQ_1863"/>
<dbReference type="HOGENOM" id="CLU_038686_3_3_9"/>
<dbReference type="OrthoDB" id="9811016at2"/>
<dbReference type="Proteomes" id="UP000001365">
    <property type="component" value="Chromosome"/>
</dbReference>
<dbReference type="GO" id="GO:0005737">
    <property type="term" value="C:cytoplasm"/>
    <property type="evidence" value="ECO:0007669"/>
    <property type="project" value="UniProtKB-SubCell"/>
</dbReference>
<dbReference type="GO" id="GO:0051301">
    <property type="term" value="P:cell division"/>
    <property type="evidence" value="ECO:0007669"/>
    <property type="project" value="UniProtKB-KW"/>
</dbReference>
<dbReference type="GO" id="GO:0007059">
    <property type="term" value="P:chromosome segregation"/>
    <property type="evidence" value="ECO:0007669"/>
    <property type="project" value="UniProtKB-UniRule"/>
</dbReference>
<dbReference type="GO" id="GO:0006260">
    <property type="term" value="P:DNA replication"/>
    <property type="evidence" value="ECO:0007669"/>
    <property type="project" value="UniProtKB-UniRule"/>
</dbReference>
<dbReference type="Gene3D" id="6.10.250.2410">
    <property type="match status" value="1"/>
</dbReference>
<dbReference type="Gene3D" id="1.10.10.580">
    <property type="entry name" value="Structural maintenance of chromosome 1. Chain E"/>
    <property type="match status" value="1"/>
</dbReference>
<dbReference type="HAMAP" id="MF_01805">
    <property type="entry name" value="ScpA"/>
    <property type="match status" value="1"/>
</dbReference>
<dbReference type="InterPro" id="IPR003768">
    <property type="entry name" value="ScpA"/>
</dbReference>
<dbReference type="InterPro" id="IPR023093">
    <property type="entry name" value="ScpA-like_C"/>
</dbReference>
<dbReference type="NCBIfam" id="NF000993">
    <property type="entry name" value="PRK00104.1-2"/>
    <property type="match status" value="1"/>
</dbReference>
<dbReference type="PANTHER" id="PTHR33969">
    <property type="entry name" value="SEGREGATION AND CONDENSATION PROTEIN A"/>
    <property type="match status" value="1"/>
</dbReference>
<dbReference type="PANTHER" id="PTHR33969:SF2">
    <property type="entry name" value="SEGREGATION AND CONDENSATION PROTEIN A"/>
    <property type="match status" value="1"/>
</dbReference>
<dbReference type="Pfam" id="PF02616">
    <property type="entry name" value="SMC_ScpA"/>
    <property type="match status" value="1"/>
</dbReference>
<proteinExistence type="inferred from homology"/>
<reference key="1">
    <citation type="journal article" date="2009" name="PLoS Pathog.">
        <title>Genomic evidence for the evolution of Streptococcus equi: host restriction, increased virulence, and genetic exchange with human pathogens.</title>
        <authorList>
            <person name="Holden M.T.G."/>
            <person name="Heather Z."/>
            <person name="Paillot R."/>
            <person name="Steward K.F."/>
            <person name="Webb K."/>
            <person name="Ainslie F."/>
            <person name="Jourdan T."/>
            <person name="Bason N.C."/>
            <person name="Holroyd N.E."/>
            <person name="Mungall K."/>
            <person name="Quail M.A."/>
            <person name="Sanders M."/>
            <person name="Simmonds M."/>
            <person name="Willey D."/>
            <person name="Brooks K."/>
            <person name="Aanensen D.M."/>
            <person name="Spratt B.G."/>
            <person name="Jolley K.A."/>
            <person name="Maiden M.C.J."/>
            <person name="Kehoe M."/>
            <person name="Chanter N."/>
            <person name="Bentley S.D."/>
            <person name="Robinson C."/>
            <person name="Maskell D.J."/>
            <person name="Parkhill J."/>
            <person name="Waller A.S."/>
        </authorList>
    </citation>
    <scope>NUCLEOTIDE SEQUENCE [LARGE SCALE GENOMIC DNA]</scope>
    <source>
        <strain>4047</strain>
    </source>
</reference>
<feature type="chain" id="PRO_1000187567" description="Segregation and condensation protein A">
    <location>
        <begin position="1"/>
        <end position="235"/>
    </location>
</feature>
<comment type="function">
    <text evidence="1">Participates in chromosomal partition during cell division. May act via the formation of a condensin-like complex containing Smc and ScpB that pull DNA away from mid-cell into both cell halves.</text>
</comment>
<comment type="subunit">
    <text evidence="1">Component of a cohesin-like complex composed of ScpA, ScpB and the Smc homodimer, in which ScpA and ScpB bind to the head domain of Smc. The presence of the three proteins is required for the association of the complex with DNA.</text>
</comment>
<comment type="subcellular location">
    <subcellularLocation>
        <location evidence="1">Cytoplasm</location>
    </subcellularLocation>
    <text evidence="1">Associated with two foci at the outer edges of the nucleoid region in young cells, and at four foci within both cell halves in older cells.</text>
</comment>
<comment type="similarity">
    <text evidence="1">Belongs to the ScpA family.</text>
</comment>
<gene>
    <name evidence="1" type="primary">scpA</name>
    <name type="ordered locus">SEQ_1863</name>
</gene>
<organism>
    <name type="scientific">Streptococcus equi subsp. equi (strain 4047)</name>
    <dbReference type="NCBI Taxonomy" id="553482"/>
    <lineage>
        <taxon>Bacteria</taxon>
        <taxon>Bacillati</taxon>
        <taxon>Bacillota</taxon>
        <taxon>Bacilli</taxon>
        <taxon>Lactobacillales</taxon>
        <taxon>Streptococcaceae</taxon>
        <taxon>Streptococcus</taxon>
    </lineage>
</organism>